<feature type="chain" id="PRO_0000462013" description="RNA-directed RNA polymerase L">
    <location>
        <begin position="1"/>
        <end position="2261"/>
    </location>
</feature>
<feature type="domain" description="RdRp catalytic" evidence="5">
    <location>
        <begin position="662"/>
        <end position="846"/>
    </location>
</feature>
<feature type="domain" description="Mononegavirus-type SAM-dependent 2'-O-MTase" evidence="6">
    <location>
        <begin position="1781"/>
        <end position="1994"/>
    </location>
</feature>
<feature type="region of interest" description="Disordered" evidence="7">
    <location>
        <begin position="630"/>
        <end position="651"/>
    </location>
</feature>
<feature type="region of interest" description="PRNTase" evidence="1">
    <location>
        <begin position="919"/>
        <end position="1405"/>
    </location>
</feature>
<reference key="1">
    <citation type="journal article" date="2005" name="Virus Res.">
        <title>Genetic characterization of L-Zagreb mumps vaccine strain.</title>
        <authorList>
            <person name="Ivancic J."/>
            <person name="Kosutic Gulija T."/>
            <person name="Forcic D."/>
            <person name="Baricevic M."/>
            <person name="Jug R."/>
            <person name="Mesko-Prejac M."/>
            <person name="Mazuran R."/>
        </authorList>
    </citation>
    <scope>NUCLEOTIDE SEQUENCE [GENOMIC RNA]</scope>
    <source>
        <strain>L-Zagreb vaccine</strain>
    </source>
</reference>
<reference key="2">
    <citation type="journal article" date="2016" name="Virol. J.">
        <title>Identification of mumps virus protein and lipid composition by mass spectrometry.</title>
        <authorList>
            <person name="Brgles M."/>
            <person name="Bonta M."/>
            <person name="Santak M."/>
            <person name="Jagusic M."/>
            <person name="Forcic D."/>
            <person name="Halassy B."/>
            <person name="Allmaier G."/>
            <person name="Marchetti-Deschmann M."/>
        </authorList>
    </citation>
    <scope>SUBCELLULAR LOCATION</scope>
    <source>
        <strain>L-Zagreb vaccine</strain>
    </source>
</reference>
<reference key="3">
    <citation type="journal article" date="2018" name="Virol. J.">
        <title>Mass spectrometry-based investigation of measles and mumps virus proteome.</title>
        <authorList>
            <person name="Sviben D."/>
            <person name="Forcic D."/>
            <person name="Halassy B."/>
            <person name="Allmaier G."/>
            <person name="Marchetti-Deschmann M."/>
            <person name="Brgles M."/>
        </authorList>
    </citation>
    <scope>SUBCELLULAR LOCATION</scope>
    <source>
        <strain>L-Zagreb vaccine</strain>
    </source>
</reference>
<sequence length="2261" mass="256819">MAGLNEILLPEVHLNSPIVRYKLFYYILHGQLPNDLEPDDLGPLANQNWKAIRAEESQVHARLKQIRVELIARIPSLRWTRSQREIAILIWPRILPILQAYDLRQSMQLPTVWEKLTQSTVNLISDGLERVVLHISNQLTGKPNLFTRSRAGQDAKDYSIPSTRELSQIWFNNEWSGSVKTWLMIKYRMRQLITNQKTGELTDLVTIVDTRSTLCIITPELVALYSNEHKALTYLTFEMVLMVTDMLEGRLNVSSLCTASHYLSPLKKRIEILLTLVDDLALLMGDKVYGVVSSLESFVYAQLQYGDPVVDIKGTFYGFICNEILDLLTEDNIFTEEEANKVLLDLTSQFDNLSPDLTAELLCIMRLWGHPTLTASQAASKVRESMCAPKVLDFQTIMKTLAFFHAILINGYRRSHNGIWPPTTLHGNAPKSLIEMRHDNSELKYEYVLKNWKSISMLRIHKCFDASPDEDLSIFMKDKAISCPKQDWMGVFRRSLIKQRYRDANRPLPQPFNRRLLLNFLEDDRFDPIKELEYVTSGEYLRDPEFCASYSLKEKEIKATGRIFAKMTKRMRSCQVIAESLLANHAGKLMRENGVVLDQLKLTKSLLTMNQIGIISEHSRRSTADNMTLAHSGSNKHRINNSQFKKNKDSKHEMPDDGFEIAACFLTTDLTKYCLNWRYQVIIPFARTLNSMYGVPHLFEWIHLRLMRSTLYVGDPFNPPSDPTQLDLDTALNDDIFIVSPRGGIEGLCQKLWTMISISTIILSATEANTRVMSMVQGDNQAIAITTRVVRSLSHTEKKEQAYKASKLFFERLRANNHGIGHHLKEQETILSSDFFIYSKRVFYKGRILTQALKNVSKMCLTADILGECSQASCSNLATTVMRLTENGVEKDLCYFLNAFMTIRQLCYDLVFPQTKSLSQDITNAYLNHPILISRLCLLPSQLGGLNFFSCSRLFNRNIGDPLVSAIADVKRLIKAGCLDIWVLYNILGRRPGKGKWSTLAADPYTLNIDYLVPSTTFLKKHAQYTLMERSVNPMLRGVFSENAAEEEEELAQYLLDREVVMPRVAHVILAQSSCGRRKQIQGYLDSTRTIIRYSLEVRPLSAKKLNTVIEYNLLYLSYNLEIIEKPNIVQPFLNAINVDTCSIDIARSLRKLSWATLLNGRPIEGLETPDPIELVHGCLIIGSDECEHCSSGDDKFTWFFLPKGIRLDNDPAFNPPIRVPYIGSKTDERRVASMAYIKGASVSLKSALRLAGVYIWAFGDTEESWQDAYELASTRVNLTLEQLQSLTPLPTSANLVHRLDDGTTQLKFTPASSYAFSSFVHISNDCQVLEIDDQVTDSNLIYQQVMITGLALIETWNNPPINFSVYETTLHLHTGSSCCIRPVESCVVNPPLLPVPFINVPQMNKFVYDPEPLSLLEMEKIEDIAYQTRIGGLDQIPLLEKIPLLAHLTAKQMVNSITGLDEATSIVNDAVVQADYTSNWISECCYTYIDSVFVYSGWALLLELSYQMYYLRIQGIQGILDYVYMTLRRIPGMAITGISSTISHPRILRRCINLDVIAPINSPHIASLDYTKLSIDAVMWGTKQVLTNISQGIDYEIVVPSESQLTLSDRVLNLVARKLSLLAIIWANYNYPPKVKGMSPEDKCQALTTHLLQTVEYVEHIQIEKTNIRRMVIEPKLTAYPSNLFYLSRKLLNAIRDSEEGQFLIASYYNSFGYLEPILMESKIFNLSSSESASLTEFDFILNLELSETSLEKYSLPSLLMTAENMDNPFPQPPLHHVLRPLGLSSTSWYKTISVLNYISHMKIYDGAHLYLAEGSGASMSLIETFLPGETIWYNSLFNSGENPPQRNFAPLPTQFIESVPYRLIQAGIAAGSGVVQSFYPLWNGNSDITDLSTKTSVEYIIHKVGADTCALVHVDLEGVPGSMNSMLERAQVHALLITVTVLKPGGLLILKASWEPFNRFSFLLTILWQFFSTIRILRSSYSDPNNHEVYIIATLAVDPTTSSFTTALNRARTLNEQGFSLIPPELVSEYWRRRVEQGQIIQDRIDKVISECVRDQYLADNNIILQAGGTPSTRKWLDLPDYPSFNELQSEMARLITIHLKEVIEILKGQSSDHDTLLFTSYNVGPLGKINTILRLIVERILMYTVRNWCILPTQTRLTLRQSIELGEFRLRDVITPMEILKLSPNRKYLKSALNQSTFNHLMGETSDILLNRAYQKRIWKAIGCVIYCFGLLTPDVEDSERIDIDNDIPDYDIHGDII</sequence>
<name>L_MUMPZ</name>
<dbReference type="EC" id="2.7.7.48" evidence="3"/>
<dbReference type="EC" id="3.6.1.-" evidence="2"/>
<dbReference type="EC" id="2.7.7.88" evidence="2"/>
<dbReference type="EC" id="2.1.1.375" evidence="2"/>
<dbReference type="EMBL" id="AY685920">
    <property type="protein sequence ID" value="AAV65064.1"/>
    <property type="molecule type" value="Genomic_RNA"/>
</dbReference>
<dbReference type="EMBL" id="AY685921">
    <property type="protein sequence ID" value="AAV65073.1"/>
    <property type="molecule type" value="Genomic_RNA"/>
</dbReference>
<dbReference type="SMR" id="Q5SC50"/>
<dbReference type="Proteomes" id="UP000130023">
    <property type="component" value="Genome"/>
</dbReference>
<dbReference type="Proteomes" id="UP000181577">
    <property type="component" value="Genome"/>
</dbReference>
<dbReference type="GO" id="GO:0030430">
    <property type="term" value="C:host cell cytoplasm"/>
    <property type="evidence" value="ECO:0007669"/>
    <property type="project" value="UniProtKB-KW"/>
</dbReference>
<dbReference type="GO" id="GO:0044423">
    <property type="term" value="C:virion component"/>
    <property type="evidence" value="ECO:0007669"/>
    <property type="project" value="UniProtKB-KW"/>
</dbReference>
<dbReference type="GO" id="GO:0005524">
    <property type="term" value="F:ATP binding"/>
    <property type="evidence" value="ECO:0007669"/>
    <property type="project" value="UniProtKB-KW"/>
</dbReference>
<dbReference type="GO" id="GO:0016787">
    <property type="term" value="F:hydrolase activity"/>
    <property type="evidence" value="ECO:0007669"/>
    <property type="project" value="UniProtKB-KW"/>
</dbReference>
<dbReference type="GO" id="GO:0004482">
    <property type="term" value="F:mRNA 5'-cap (guanine-N7-)-methyltransferase activity"/>
    <property type="evidence" value="ECO:0007669"/>
    <property type="project" value="InterPro"/>
</dbReference>
<dbReference type="GO" id="GO:0003968">
    <property type="term" value="F:RNA-directed RNA polymerase activity"/>
    <property type="evidence" value="ECO:0007669"/>
    <property type="project" value="UniProtKB-KW"/>
</dbReference>
<dbReference type="Gene3D" id="3.40.50.12760">
    <property type="match status" value="1"/>
</dbReference>
<dbReference type="InterPro" id="IPR039736">
    <property type="entry name" value="L_poly_C"/>
</dbReference>
<dbReference type="InterPro" id="IPR026890">
    <property type="entry name" value="Mononeg_mRNAcap"/>
</dbReference>
<dbReference type="InterPro" id="IPR014023">
    <property type="entry name" value="Mononeg_RNA_pol_cat"/>
</dbReference>
<dbReference type="InterPro" id="IPR025786">
    <property type="entry name" value="Mononega_L_MeTrfase"/>
</dbReference>
<dbReference type="InterPro" id="IPR016269">
    <property type="entry name" value="RNA-dir_pol_paramyxovirus"/>
</dbReference>
<dbReference type="NCBIfam" id="TIGR04198">
    <property type="entry name" value="paramyx_RNAcap"/>
    <property type="match status" value="1"/>
</dbReference>
<dbReference type="Pfam" id="PF14318">
    <property type="entry name" value="Mononeg_mRNAcap"/>
    <property type="match status" value="1"/>
</dbReference>
<dbReference type="Pfam" id="PF00946">
    <property type="entry name" value="Mononeg_RNA_pol"/>
    <property type="match status" value="1"/>
</dbReference>
<dbReference type="PIRSF" id="PIRSF000830">
    <property type="entry name" value="RNA_pol_ParamyxoV"/>
    <property type="match status" value="1"/>
</dbReference>
<dbReference type="PROSITE" id="PS50526">
    <property type="entry name" value="RDRP_SSRNA_NEG_NONSEG"/>
    <property type="match status" value="1"/>
</dbReference>
<dbReference type="PROSITE" id="PS51590">
    <property type="entry name" value="SAM_MT_MNV_L"/>
    <property type="match status" value="1"/>
</dbReference>
<comment type="function">
    <text evidence="2">RNA-directed RNA polymerase that catalyzes the transcription of viral mRNAs, their capping and polyadenylation. The template is composed of the viral RNA tightly encapsidated by the nucleoprotein (N). The viral polymerase binds to the genomic RNA at the 3' leader promoter, and transcribes subsequently all viral mRNAs with a decreasing efficiency. The first gene is the most transcribed, and the last the least transcribed. The viral phosphoprotein acts as a processivity factor. Capping is concomitant with initiation of mRNA transcription. Indeed, a GDP polyribonucleotidyl transferase (PRNTase) adds the cap structure when the nascent RNA chain length has reached few nucleotides. Ribose 2'-O methylation of viral mRNA cap precedes and facilitates subsequent guanine-N-7 methylation, both activities being carried by the viral polymerase. Polyadenylation of mRNAs occur by a stuttering mechanism at a slipery stop site present at the end viral genes. After finishing transcription of a mRNA, the polymerase can resume transcription of the downstream gene.</text>
</comment>
<comment type="function">
    <text evidence="2">RNA-directed RNA polymerase that catalyzes the replication of viral genomic RNA. The template is composed of the viral RNA tightly encapsidated by the nucleoprotein (N). The replicase mode is dependent on intracellular N protein concentration. In this mode, the polymerase replicates the whole viral genome without recognizing transcriptional signals, and the replicated genome is not caped or polyadenylated.</text>
</comment>
<comment type="catalytic activity">
    <reaction evidence="5">
        <text>RNA(n) + a ribonucleoside 5'-triphosphate = RNA(n+1) + diphosphate</text>
        <dbReference type="Rhea" id="RHEA:21248"/>
        <dbReference type="Rhea" id="RHEA-COMP:14527"/>
        <dbReference type="Rhea" id="RHEA-COMP:17342"/>
        <dbReference type="ChEBI" id="CHEBI:33019"/>
        <dbReference type="ChEBI" id="CHEBI:61557"/>
        <dbReference type="ChEBI" id="CHEBI:140395"/>
        <dbReference type="EC" id="2.7.7.48"/>
    </reaction>
</comment>
<comment type="catalytic activity">
    <reaction evidence="2">
        <text>a 5'-end (5'-triphosphoguanosine)-adenylyl-adenylyl-cytidylyl-adenosine in mRNA + 2 S-adenosyl-L-methionine = a 5'-end (N(7)-methyl 5'-triphosphoguanosine)-(2'-O-methyladenylyl)-adenylyl-cytidylyl-adenosine in mRNA + 2 S-adenosyl-L-homocysteine + H(+)</text>
        <dbReference type="Rhea" id="RHEA:65376"/>
        <dbReference type="Rhea" id="RHEA-COMP:16797"/>
        <dbReference type="Rhea" id="RHEA-COMP:16798"/>
        <dbReference type="ChEBI" id="CHEBI:15378"/>
        <dbReference type="ChEBI" id="CHEBI:57856"/>
        <dbReference type="ChEBI" id="CHEBI:59789"/>
        <dbReference type="ChEBI" id="CHEBI:156483"/>
        <dbReference type="ChEBI" id="CHEBI:156484"/>
        <dbReference type="EC" id="2.1.1.375"/>
    </reaction>
</comment>
<comment type="catalytic activity">
    <reaction evidence="2">
        <text>a 5'-end (5'-triphosphoguanosine)-adenylyl-adenylyl-cytidylyl-adenosine in mRNA + S-adenosyl-L-methionine = a 5'-end (5'-triphosphoguanosine)-(2'-O-methyladenylyl)-adenylyl-cytidylyl-adenosine in mRNA + S-adenosyl-L-homocysteine + H(+)</text>
        <dbReference type="Rhea" id="RHEA:65380"/>
        <dbReference type="Rhea" id="RHEA-COMP:16797"/>
        <dbReference type="Rhea" id="RHEA-COMP:16801"/>
        <dbReference type="ChEBI" id="CHEBI:15378"/>
        <dbReference type="ChEBI" id="CHEBI:57856"/>
        <dbReference type="ChEBI" id="CHEBI:59789"/>
        <dbReference type="ChEBI" id="CHEBI:156482"/>
        <dbReference type="ChEBI" id="CHEBI:156484"/>
    </reaction>
</comment>
<comment type="catalytic activity">
    <reaction evidence="3">
        <text>a 5'-end triphospho-adenylyl-adenylyl-cytidylyl-adenosine in mRNA + GDP + H(+) = a 5'-end (5'-triphosphoguanosine)-adenylyl-adenylyl-cytidylyl-adenosine in mRNA + diphosphate</text>
        <dbReference type="Rhea" id="RHEA:65436"/>
        <dbReference type="Rhea" id="RHEA-COMP:16797"/>
        <dbReference type="Rhea" id="RHEA-COMP:16799"/>
        <dbReference type="ChEBI" id="CHEBI:15378"/>
        <dbReference type="ChEBI" id="CHEBI:33019"/>
        <dbReference type="ChEBI" id="CHEBI:58189"/>
        <dbReference type="ChEBI" id="CHEBI:156484"/>
        <dbReference type="ChEBI" id="CHEBI:156503"/>
        <dbReference type="EC" id="2.7.7.88"/>
    </reaction>
</comment>
<comment type="catalytic activity">
    <reaction evidence="2">
        <text>a 5'-end (5'-triphosphoguanosine)-(2'-O-methyladenylyl)-adenylyl-cytidylyl-adenosine in mRNA + S-adenosyl-L-methionine = a 5'-end (N(7)-methyl 5'-triphosphoguanosine)-(2'-O-methyladenylyl)-adenylyl-cytidylyl-adenosine in mRNA + S-adenosyl-L-homocysteine</text>
        <dbReference type="Rhea" id="RHEA:65440"/>
        <dbReference type="Rhea" id="RHEA-COMP:16798"/>
        <dbReference type="Rhea" id="RHEA-COMP:16801"/>
        <dbReference type="ChEBI" id="CHEBI:57856"/>
        <dbReference type="ChEBI" id="CHEBI:59789"/>
        <dbReference type="ChEBI" id="CHEBI:156482"/>
        <dbReference type="ChEBI" id="CHEBI:156483"/>
    </reaction>
</comment>
<comment type="catalytic activity">
    <reaction evidence="3">
        <text>GTP + H2O = GDP + phosphate + H(+)</text>
        <dbReference type="Rhea" id="RHEA:19669"/>
        <dbReference type="ChEBI" id="CHEBI:15377"/>
        <dbReference type="ChEBI" id="CHEBI:15378"/>
        <dbReference type="ChEBI" id="CHEBI:37565"/>
        <dbReference type="ChEBI" id="CHEBI:43474"/>
        <dbReference type="ChEBI" id="CHEBI:58189"/>
    </reaction>
</comment>
<comment type="subunit">
    <text evidence="1 4">Interacts with the P protein; this interaction forms the polymerase complex (By similarity). Interacts with host RUVBL1 and RUVBL2 (R2TP complex); this interaction regulates the viral transcription (By similarity).</text>
</comment>
<comment type="subcellular location">
    <subcellularLocation>
        <location evidence="8 9">Virion</location>
    </subcellularLocation>
</comment>
<comment type="similarity">
    <text evidence="10">Belongs to the paramyxovirus L protein family.</text>
</comment>
<evidence type="ECO:0000250" key="1">
    <source>
        <dbReference type="UniProtKB" id="C0JJA4"/>
    </source>
</evidence>
<evidence type="ECO:0000250" key="2">
    <source>
        <dbReference type="UniProtKB" id="P03523"/>
    </source>
</evidence>
<evidence type="ECO:0000250" key="3">
    <source>
        <dbReference type="UniProtKB" id="P28887"/>
    </source>
</evidence>
<evidence type="ECO:0000250" key="4">
    <source>
        <dbReference type="UniProtKB" id="P30929"/>
    </source>
</evidence>
<evidence type="ECO:0000255" key="5">
    <source>
        <dbReference type="PROSITE-ProRule" id="PRU00539"/>
    </source>
</evidence>
<evidence type="ECO:0000255" key="6">
    <source>
        <dbReference type="PROSITE-ProRule" id="PRU00923"/>
    </source>
</evidence>
<evidence type="ECO:0000256" key="7">
    <source>
        <dbReference type="SAM" id="MobiDB-lite"/>
    </source>
</evidence>
<evidence type="ECO:0000269" key="8">
    <source>
    </source>
</evidence>
<evidence type="ECO:0000269" key="9">
    <source>
    </source>
</evidence>
<evidence type="ECO:0000305" key="10"/>
<organism>
    <name type="scientific">Mumps virus genotype N (strain L-Zagreb vaccine)</name>
    <name type="common">MuV</name>
    <dbReference type="NCBI Taxonomy" id="301186"/>
    <lineage>
        <taxon>Viruses</taxon>
        <taxon>Riboviria</taxon>
        <taxon>Orthornavirae</taxon>
        <taxon>Negarnaviricota</taxon>
        <taxon>Haploviricotina</taxon>
        <taxon>Monjiviricetes</taxon>
        <taxon>Mononegavirales</taxon>
        <taxon>Paramyxoviridae</taxon>
        <taxon>Rubulavirinae</taxon>
        <taxon>Orthorubulavirus</taxon>
        <taxon>Orthorubulavirus parotitidis</taxon>
        <taxon>Mumps orthorubulavirus</taxon>
    </lineage>
</organism>
<gene>
    <name type="primary">L</name>
</gene>
<keyword id="KW-0067">ATP-binding</keyword>
<keyword id="KW-0378">Hydrolase</keyword>
<keyword id="KW-0489">Methyltransferase</keyword>
<keyword id="KW-0506">mRNA capping</keyword>
<keyword id="KW-0507">mRNA processing</keyword>
<keyword id="KW-0511">Multifunctional enzyme</keyword>
<keyword id="KW-0547">Nucleotide-binding</keyword>
<keyword id="KW-0548">Nucleotidyltransferase</keyword>
<keyword id="KW-0696">RNA-directed RNA polymerase</keyword>
<keyword id="KW-0949">S-adenosyl-L-methionine</keyword>
<keyword id="KW-0808">Transferase</keyword>
<keyword id="KW-0693">Viral RNA replication</keyword>
<keyword id="KW-0946">Virion</keyword>
<proteinExistence type="inferred from homology"/>
<accession>Q5SC50</accession>
<protein>
    <recommendedName>
        <fullName>RNA-directed RNA polymerase L</fullName>
        <shortName>Protein L</shortName>
    </recommendedName>
    <alternativeName>
        <fullName>Large structural protein</fullName>
    </alternativeName>
    <alternativeName>
        <fullName>Replicase</fullName>
    </alternativeName>
    <alternativeName>
        <fullName>Transcriptase</fullName>
    </alternativeName>
    <domain>
        <recommendedName>
            <fullName>RNA-directed RNA polymerase</fullName>
            <ecNumber evidence="3">2.7.7.48</ecNumber>
        </recommendedName>
    </domain>
    <domain>
        <recommendedName>
            <fullName evidence="2">GTP phosphohydrolase</fullName>
            <ecNumber evidence="2">3.6.1.-</ecNumber>
        </recommendedName>
    </domain>
    <domain>
        <recommendedName>
            <fullName evidence="10">GDP polyribonucleotidyltransferase</fullName>
            <ecNumber evidence="2">2.7.7.88</ecNumber>
        </recommendedName>
        <alternativeName>
            <fullName evidence="10">PRNTase</fullName>
        </alternativeName>
    </domain>
    <domain>
        <recommendedName>
            <fullName evidence="10">mRNA cap methyltransferase</fullName>
            <ecNumber evidence="2">2.1.1.375</ecNumber>
        </recommendedName>
        <alternativeName>
            <fullName evidence="2">mRNA (guanine-N(7)-)-methyltransferase</fullName>
            <shortName evidence="2">G-N7-MTase</shortName>
        </alternativeName>
        <alternativeName>
            <fullName evidence="2">mRNA (nucleoside-2'-O-)-methyltransferase</fullName>
            <shortName evidence="2">N1-2'-O-MTase</shortName>
        </alternativeName>
    </domain>
</protein>
<organismHost>
    <name type="scientific">Homo sapiens</name>
    <name type="common">Human</name>
    <dbReference type="NCBI Taxonomy" id="9606"/>
</organismHost>